<sequence>MVRLGVNIDHIATLRQARGVDYPDPVEAAMMAIEAGADGITLHLREDRRHIQDDDVRNLKRKLTVPMNLEMATAEDIIQFAEEIKPEHCCLVPEKREELTTEGGLDVAGQQNTLKKVCARLAKVGIEVSLFIDPEEKQIDAAKAAGAPVIEIHTGHYANAKTDHEHNQQLKRIADAAAYADSLGLTVNAGHGLTIHNVQSIAAIPVINELNIGHSIISRGVLIGLAEAVKEMKTLIAGAQ</sequence>
<organism>
    <name type="scientific">Coxiella burnetii (strain Dugway 5J108-111)</name>
    <dbReference type="NCBI Taxonomy" id="434922"/>
    <lineage>
        <taxon>Bacteria</taxon>
        <taxon>Pseudomonadati</taxon>
        <taxon>Pseudomonadota</taxon>
        <taxon>Gammaproteobacteria</taxon>
        <taxon>Legionellales</taxon>
        <taxon>Coxiellaceae</taxon>
        <taxon>Coxiella</taxon>
    </lineage>
</organism>
<feature type="chain" id="PRO_1000078816" description="Pyridoxine 5'-phosphate synthase">
    <location>
        <begin position="1"/>
        <end position="240"/>
    </location>
</feature>
<feature type="active site" description="Proton acceptor" evidence="1">
    <location>
        <position position="43"/>
    </location>
</feature>
<feature type="active site" description="Proton acceptor" evidence="1">
    <location>
        <position position="70"/>
    </location>
</feature>
<feature type="active site" description="Proton donor" evidence="1">
    <location>
        <position position="191"/>
    </location>
</feature>
<feature type="binding site" evidence="1">
    <location>
        <position position="7"/>
    </location>
    <ligand>
        <name>3-amino-2-oxopropyl phosphate</name>
        <dbReference type="ChEBI" id="CHEBI:57279"/>
    </ligand>
</feature>
<feature type="binding site" evidence="1">
    <location>
        <begin position="9"/>
        <end position="10"/>
    </location>
    <ligand>
        <name>1-deoxy-D-xylulose 5-phosphate</name>
        <dbReference type="ChEBI" id="CHEBI:57792"/>
    </ligand>
</feature>
<feature type="binding site" evidence="1">
    <location>
        <position position="18"/>
    </location>
    <ligand>
        <name>3-amino-2-oxopropyl phosphate</name>
        <dbReference type="ChEBI" id="CHEBI:57279"/>
    </ligand>
</feature>
<feature type="binding site" evidence="1">
    <location>
        <position position="45"/>
    </location>
    <ligand>
        <name>1-deoxy-D-xylulose 5-phosphate</name>
        <dbReference type="ChEBI" id="CHEBI:57792"/>
    </ligand>
</feature>
<feature type="binding site" evidence="1">
    <location>
        <position position="50"/>
    </location>
    <ligand>
        <name>1-deoxy-D-xylulose 5-phosphate</name>
        <dbReference type="ChEBI" id="CHEBI:57792"/>
    </ligand>
</feature>
<feature type="binding site" evidence="1">
    <location>
        <position position="100"/>
    </location>
    <ligand>
        <name>1-deoxy-D-xylulose 5-phosphate</name>
        <dbReference type="ChEBI" id="CHEBI:57792"/>
    </ligand>
</feature>
<feature type="binding site" evidence="1">
    <location>
        <position position="192"/>
    </location>
    <ligand>
        <name>3-amino-2-oxopropyl phosphate</name>
        <dbReference type="ChEBI" id="CHEBI:57279"/>
    </ligand>
</feature>
<feature type="binding site" evidence="1">
    <location>
        <begin position="213"/>
        <end position="214"/>
    </location>
    <ligand>
        <name>3-amino-2-oxopropyl phosphate</name>
        <dbReference type="ChEBI" id="CHEBI:57279"/>
    </ligand>
</feature>
<feature type="site" description="Transition state stabilizer" evidence="1">
    <location>
        <position position="151"/>
    </location>
</feature>
<accession>A9KFA7</accession>
<reference key="1">
    <citation type="journal article" date="2009" name="Infect. Immun.">
        <title>Comparative genomics reveal extensive transposon-mediated genomic plasticity and diversity among potential effector proteins within the genus Coxiella.</title>
        <authorList>
            <person name="Beare P.A."/>
            <person name="Unsworth N."/>
            <person name="Andoh M."/>
            <person name="Voth D.E."/>
            <person name="Omsland A."/>
            <person name="Gilk S.D."/>
            <person name="Williams K.P."/>
            <person name="Sobral B.W."/>
            <person name="Kupko J.J. III"/>
            <person name="Porcella S.F."/>
            <person name="Samuel J.E."/>
            <person name="Heinzen R.A."/>
        </authorList>
    </citation>
    <scope>NUCLEOTIDE SEQUENCE [LARGE SCALE GENOMIC DNA]</scope>
    <source>
        <strain>Dugway 5J108-111</strain>
    </source>
</reference>
<proteinExistence type="inferred from homology"/>
<name>PDXJ_COXBN</name>
<dbReference type="EC" id="2.6.99.2" evidence="1"/>
<dbReference type="EMBL" id="CP000733">
    <property type="protein sequence ID" value="ABS77445.2"/>
    <property type="status" value="ALT_INIT"/>
    <property type="molecule type" value="Genomic_DNA"/>
</dbReference>
<dbReference type="SMR" id="A9KFA7"/>
<dbReference type="KEGG" id="cbd:CBUD_0488"/>
<dbReference type="HOGENOM" id="CLU_074563_0_0_6"/>
<dbReference type="UniPathway" id="UPA00244">
    <property type="reaction ID" value="UER00313"/>
</dbReference>
<dbReference type="Proteomes" id="UP000008555">
    <property type="component" value="Chromosome"/>
</dbReference>
<dbReference type="GO" id="GO:0005829">
    <property type="term" value="C:cytosol"/>
    <property type="evidence" value="ECO:0007669"/>
    <property type="project" value="TreeGrafter"/>
</dbReference>
<dbReference type="GO" id="GO:0033856">
    <property type="term" value="F:pyridoxine 5'-phosphate synthase activity"/>
    <property type="evidence" value="ECO:0007669"/>
    <property type="project" value="UniProtKB-EC"/>
</dbReference>
<dbReference type="GO" id="GO:0008615">
    <property type="term" value="P:pyridoxine biosynthetic process"/>
    <property type="evidence" value="ECO:0007669"/>
    <property type="project" value="UniProtKB-UniRule"/>
</dbReference>
<dbReference type="CDD" id="cd00003">
    <property type="entry name" value="PNPsynthase"/>
    <property type="match status" value="1"/>
</dbReference>
<dbReference type="FunFam" id="3.20.20.70:FF:000042">
    <property type="entry name" value="Pyridoxine 5'-phosphate synthase"/>
    <property type="match status" value="1"/>
</dbReference>
<dbReference type="Gene3D" id="3.20.20.70">
    <property type="entry name" value="Aldolase class I"/>
    <property type="match status" value="1"/>
</dbReference>
<dbReference type="HAMAP" id="MF_00279">
    <property type="entry name" value="PdxJ"/>
    <property type="match status" value="1"/>
</dbReference>
<dbReference type="InterPro" id="IPR013785">
    <property type="entry name" value="Aldolase_TIM"/>
</dbReference>
<dbReference type="InterPro" id="IPR004569">
    <property type="entry name" value="PyrdxlP_synth_PdxJ"/>
</dbReference>
<dbReference type="InterPro" id="IPR036130">
    <property type="entry name" value="Pyridoxine-5'_phos_synth"/>
</dbReference>
<dbReference type="NCBIfam" id="TIGR00559">
    <property type="entry name" value="pdxJ"/>
    <property type="match status" value="1"/>
</dbReference>
<dbReference type="NCBIfam" id="NF003623">
    <property type="entry name" value="PRK05265.1-1"/>
    <property type="match status" value="1"/>
</dbReference>
<dbReference type="NCBIfam" id="NF003624">
    <property type="entry name" value="PRK05265.1-2"/>
    <property type="match status" value="1"/>
</dbReference>
<dbReference type="NCBIfam" id="NF003625">
    <property type="entry name" value="PRK05265.1-3"/>
    <property type="match status" value="1"/>
</dbReference>
<dbReference type="NCBIfam" id="NF003626">
    <property type="entry name" value="PRK05265.1-4"/>
    <property type="match status" value="1"/>
</dbReference>
<dbReference type="NCBIfam" id="NF003627">
    <property type="entry name" value="PRK05265.1-5"/>
    <property type="match status" value="1"/>
</dbReference>
<dbReference type="PANTHER" id="PTHR30456">
    <property type="entry name" value="PYRIDOXINE 5'-PHOSPHATE SYNTHASE"/>
    <property type="match status" value="1"/>
</dbReference>
<dbReference type="PANTHER" id="PTHR30456:SF0">
    <property type="entry name" value="PYRIDOXINE 5'-PHOSPHATE SYNTHASE"/>
    <property type="match status" value="1"/>
</dbReference>
<dbReference type="Pfam" id="PF03740">
    <property type="entry name" value="PdxJ"/>
    <property type="match status" value="1"/>
</dbReference>
<dbReference type="SUPFAM" id="SSF63892">
    <property type="entry name" value="Pyridoxine 5'-phosphate synthase"/>
    <property type="match status" value="1"/>
</dbReference>
<keyword id="KW-0963">Cytoplasm</keyword>
<keyword id="KW-0664">Pyridoxine biosynthesis</keyword>
<keyword id="KW-0808">Transferase</keyword>
<evidence type="ECO:0000255" key="1">
    <source>
        <dbReference type="HAMAP-Rule" id="MF_00279"/>
    </source>
</evidence>
<evidence type="ECO:0000305" key="2"/>
<gene>
    <name evidence="1" type="primary">pdxJ</name>
    <name type="ordered locus">CBUD_0488</name>
</gene>
<comment type="function">
    <text evidence="1">Catalyzes the complicated ring closure reaction between the two acyclic compounds 1-deoxy-D-xylulose-5-phosphate (DXP) and 3-amino-2-oxopropyl phosphate (1-amino-acetone-3-phosphate or AAP) to form pyridoxine 5'-phosphate (PNP) and inorganic phosphate.</text>
</comment>
<comment type="catalytic activity">
    <reaction evidence="1">
        <text>3-amino-2-oxopropyl phosphate + 1-deoxy-D-xylulose 5-phosphate = pyridoxine 5'-phosphate + phosphate + 2 H2O + H(+)</text>
        <dbReference type="Rhea" id="RHEA:15265"/>
        <dbReference type="ChEBI" id="CHEBI:15377"/>
        <dbReference type="ChEBI" id="CHEBI:15378"/>
        <dbReference type="ChEBI" id="CHEBI:43474"/>
        <dbReference type="ChEBI" id="CHEBI:57279"/>
        <dbReference type="ChEBI" id="CHEBI:57792"/>
        <dbReference type="ChEBI" id="CHEBI:58589"/>
        <dbReference type="EC" id="2.6.99.2"/>
    </reaction>
</comment>
<comment type="pathway">
    <text evidence="1">Cofactor biosynthesis; pyridoxine 5'-phosphate biosynthesis; pyridoxine 5'-phosphate from D-erythrose 4-phosphate: step 5/5.</text>
</comment>
<comment type="subunit">
    <text evidence="1">Homooctamer; tetramer of dimers.</text>
</comment>
<comment type="subcellular location">
    <subcellularLocation>
        <location evidence="1">Cytoplasm</location>
    </subcellularLocation>
</comment>
<comment type="similarity">
    <text evidence="1">Belongs to the PNP synthase family.</text>
</comment>
<comment type="sequence caution" evidence="2">
    <conflict type="erroneous initiation">
        <sequence resource="EMBL-CDS" id="ABS77445"/>
    </conflict>
</comment>
<protein>
    <recommendedName>
        <fullName evidence="1">Pyridoxine 5'-phosphate synthase</fullName>
        <shortName evidence="1">PNP synthase</shortName>
        <ecNumber evidence="1">2.6.99.2</ecNumber>
    </recommendedName>
</protein>